<accession>P58988</accession>
<gene>
    <name evidence="1" type="primary">hutU</name>
    <name type="ordered locus">XCC1577</name>
</gene>
<name>HUTU_XANCP</name>
<protein>
    <recommendedName>
        <fullName evidence="1">Urocanate hydratase</fullName>
        <shortName evidence="1">Urocanase</shortName>
        <ecNumber evidence="1">4.2.1.49</ecNumber>
    </recommendedName>
    <alternativeName>
        <fullName evidence="1">Imidazolonepropionate hydrolase</fullName>
    </alternativeName>
</protein>
<evidence type="ECO:0000255" key="1">
    <source>
        <dbReference type="HAMAP-Rule" id="MF_00577"/>
    </source>
</evidence>
<evidence type="ECO:0000305" key="2"/>
<sequence>MTRHDSTRVIRAATGTTLTAKSWLTEAPLRMLMNNLDPDVAERPQELVVYGGIGRAARDWESFDAIVAALTRLDDDQTLLVQSGKPVGVFRTHADAPRVLIANSNLVPRWATWDHFNELDKKGLAMYGQMTAGSWIYIGAQGIVQGTYETFVEMGRQHYGGSLAGKWLFTGGLGGMGGAQPLAAVMAGASCLAVECRRSSIDMRLRTGYLDTWTDSLDEALRLIEESCTAKRPLSVGLLGNVADVLDELLLRGIKPDLLTDQTSAHDPVNGYLPQGWSVEEWDAKRVSAPKDVEAAAREAMANHIRAMLTFHALGVPTVDYGNNLRQMALEEGIDNAFDFPGFVPAYIRPLFCRGIGPFRWVALSGDPEDIAKTDAKVKELIPDDAHLHRWLDMAAEKIAFQGLPARICWVGLGDRHRLGLAFNAMVRSGELKAPVVIGRDHLDSGSVASPNRETEAMADGSDAVSDWPLLNALLNTASGATWVSLHHGGGVGMGFSQHAGMVIVCDGSEAADKRIERVLWNDPATGVMRHADAGYAIAVECAKDQGLDLPGILS</sequence>
<organism>
    <name type="scientific">Xanthomonas campestris pv. campestris (strain ATCC 33913 / DSM 3586 / NCPPB 528 / LMG 568 / P 25)</name>
    <dbReference type="NCBI Taxonomy" id="190485"/>
    <lineage>
        <taxon>Bacteria</taxon>
        <taxon>Pseudomonadati</taxon>
        <taxon>Pseudomonadota</taxon>
        <taxon>Gammaproteobacteria</taxon>
        <taxon>Lysobacterales</taxon>
        <taxon>Lysobacteraceae</taxon>
        <taxon>Xanthomonas</taxon>
    </lineage>
</organism>
<keyword id="KW-0963">Cytoplasm</keyword>
<keyword id="KW-0369">Histidine metabolism</keyword>
<keyword id="KW-0456">Lyase</keyword>
<keyword id="KW-0520">NAD</keyword>
<keyword id="KW-1185">Reference proteome</keyword>
<comment type="function">
    <text evidence="1">Catalyzes the conversion of urocanate to 4-imidazolone-5-propionate.</text>
</comment>
<comment type="catalytic activity">
    <reaction evidence="1">
        <text>4-imidazolone-5-propanoate = trans-urocanate + H2O</text>
        <dbReference type="Rhea" id="RHEA:13101"/>
        <dbReference type="ChEBI" id="CHEBI:15377"/>
        <dbReference type="ChEBI" id="CHEBI:17771"/>
        <dbReference type="ChEBI" id="CHEBI:77893"/>
        <dbReference type="EC" id="4.2.1.49"/>
    </reaction>
</comment>
<comment type="cofactor">
    <cofactor evidence="1">
        <name>NAD(+)</name>
        <dbReference type="ChEBI" id="CHEBI:57540"/>
    </cofactor>
    <text evidence="1">Binds 1 NAD(+) per subunit.</text>
</comment>
<comment type="pathway">
    <text evidence="1">Amino-acid degradation; L-histidine degradation into L-glutamate; N-formimidoyl-L-glutamate from L-histidine: step 2/3.</text>
</comment>
<comment type="subcellular location">
    <subcellularLocation>
        <location evidence="1">Cytoplasm</location>
    </subcellularLocation>
</comment>
<comment type="similarity">
    <text evidence="1">Belongs to the urocanase family.</text>
</comment>
<comment type="sequence caution" evidence="2">
    <conflict type="erroneous initiation">
        <sequence resource="EMBL-CDS" id="AAM40872"/>
    </conflict>
</comment>
<reference key="1">
    <citation type="journal article" date="2002" name="Nature">
        <title>Comparison of the genomes of two Xanthomonas pathogens with differing host specificities.</title>
        <authorList>
            <person name="da Silva A.C.R."/>
            <person name="Ferro J.A."/>
            <person name="Reinach F.C."/>
            <person name="Farah C.S."/>
            <person name="Furlan L.R."/>
            <person name="Quaggio R.B."/>
            <person name="Monteiro-Vitorello C.B."/>
            <person name="Van Sluys M.A."/>
            <person name="Almeida N.F. Jr."/>
            <person name="Alves L.M.C."/>
            <person name="do Amaral A.M."/>
            <person name="Bertolini M.C."/>
            <person name="Camargo L.E.A."/>
            <person name="Camarotte G."/>
            <person name="Cannavan F."/>
            <person name="Cardozo J."/>
            <person name="Chambergo F."/>
            <person name="Ciapina L.P."/>
            <person name="Cicarelli R.M.B."/>
            <person name="Coutinho L.L."/>
            <person name="Cursino-Santos J.R."/>
            <person name="El-Dorry H."/>
            <person name="Faria J.B."/>
            <person name="Ferreira A.J.S."/>
            <person name="Ferreira R.C.C."/>
            <person name="Ferro M.I.T."/>
            <person name="Formighieri E.F."/>
            <person name="Franco M.C."/>
            <person name="Greggio C.C."/>
            <person name="Gruber A."/>
            <person name="Katsuyama A.M."/>
            <person name="Kishi L.T."/>
            <person name="Leite R.P."/>
            <person name="Lemos E.G.M."/>
            <person name="Lemos M.V.F."/>
            <person name="Locali E.C."/>
            <person name="Machado M.A."/>
            <person name="Madeira A.M.B.N."/>
            <person name="Martinez-Rossi N.M."/>
            <person name="Martins E.C."/>
            <person name="Meidanis J."/>
            <person name="Menck C.F.M."/>
            <person name="Miyaki C.Y."/>
            <person name="Moon D.H."/>
            <person name="Moreira L.M."/>
            <person name="Novo M.T.M."/>
            <person name="Okura V.K."/>
            <person name="Oliveira M.C."/>
            <person name="Oliveira V.R."/>
            <person name="Pereira H.A."/>
            <person name="Rossi A."/>
            <person name="Sena J.A.D."/>
            <person name="Silva C."/>
            <person name="de Souza R.F."/>
            <person name="Spinola L.A.F."/>
            <person name="Takita M.A."/>
            <person name="Tamura R.E."/>
            <person name="Teixeira E.C."/>
            <person name="Tezza R.I.D."/>
            <person name="Trindade dos Santos M."/>
            <person name="Truffi D."/>
            <person name="Tsai S.M."/>
            <person name="White F.F."/>
            <person name="Setubal J.C."/>
            <person name="Kitajima J.P."/>
        </authorList>
    </citation>
    <scope>NUCLEOTIDE SEQUENCE [LARGE SCALE GENOMIC DNA]</scope>
    <source>
        <strain>ATCC 33913 / DSM 3586 / NCPPB 528 / LMG 568 / P 25</strain>
    </source>
</reference>
<feature type="chain" id="PRO_0000207368" description="Urocanate hydratase">
    <location>
        <begin position="1"/>
        <end position="555"/>
    </location>
</feature>
<feature type="active site" evidence="1">
    <location>
        <position position="409"/>
    </location>
</feature>
<feature type="binding site" evidence="1">
    <location>
        <begin position="51"/>
        <end position="52"/>
    </location>
    <ligand>
        <name>NAD(+)</name>
        <dbReference type="ChEBI" id="CHEBI:57540"/>
    </ligand>
</feature>
<feature type="binding site" evidence="1">
    <location>
        <position position="129"/>
    </location>
    <ligand>
        <name>NAD(+)</name>
        <dbReference type="ChEBI" id="CHEBI:57540"/>
    </ligand>
</feature>
<feature type="binding site" evidence="1">
    <location>
        <begin position="175"/>
        <end position="177"/>
    </location>
    <ligand>
        <name>NAD(+)</name>
        <dbReference type="ChEBI" id="CHEBI:57540"/>
    </ligand>
</feature>
<feature type="binding site" evidence="1">
    <location>
        <position position="195"/>
    </location>
    <ligand>
        <name>NAD(+)</name>
        <dbReference type="ChEBI" id="CHEBI:57540"/>
    </ligand>
</feature>
<feature type="binding site" evidence="1">
    <location>
        <begin position="262"/>
        <end position="266"/>
    </location>
    <ligand>
        <name>NAD(+)</name>
        <dbReference type="ChEBI" id="CHEBI:57540"/>
    </ligand>
</feature>
<feature type="binding site" evidence="1">
    <location>
        <begin position="272"/>
        <end position="273"/>
    </location>
    <ligand>
        <name>NAD(+)</name>
        <dbReference type="ChEBI" id="CHEBI:57540"/>
    </ligand>
</feature>
<feature type="binding site" evidence="1">
    <location>
        <position position="321"/>
    </location>
    <ligand>
        <name>NAD(+)</name>
        <dbReference type="ChEBI" id="CHEBI:57540"/>
    </ligand>
</feature>
<feature type="binding site" evidence="1">
    <location>
        <position position="491"/>
    </location>
    <ligand>
        <name>NAD(+)</name>
        <dbReference type="ChEBI" id="CHEBI:57540"/>
    </ligand>
</feature>
<proteinExistence type="inferred from homology"/>
<dbReference type="EC" id="4.2.1.49" evidence="1"/>
<dbReference type="EMBL" id="AE008922">
    <property type="protein sequence ID" value="AAM40872.1"/>
    <property type="status" value="ALT_INIT"/>
    <property type="molecule type" value="Genomic_DNA"/>
</dbReference>
<dbReference type="RefSeq" id="NP_636948.2">
    <property type="nucleotide sequence ID" value="NC_003902.1"/>
</dbReference>
<dbReference type="RefSeq" id="WP_011036759.1">
    <property type="nucleotide sequence ID" value="NC_003902.1"/>
</dbReference>
<dbReference type="SMR" id="P58988"/>
<dbReference type="STRING" id="190485.XCC1577"/>
<dbReference type="EnsemblBacteria" id="AAM40872">
    <property type="protein sequence ID" value="AAM40872"/>
    <property type="gene ID" value="XCC1577"/>
</dbReference>
<dbReference type="KEGG" id="xcc:XCC1577"/>
<dbReference type="PATRIC" id="fig|190485.4.peg.1690"/>
<dbReference type="eggNOG" id="COG2987">
    <property type="taxonomic scope" value="Bacteria"/>
</dbReference>
<dbReference type="HOGENOM" id="CLU_018868_0_1_6"/>
<dbReference type="OrthoDB" id="9764874at2"/>
<dbReference type="UniPathway" id="UPA00379">
    <property type="reaction ID" value="UER00550"/>
</dbReference>
<dbReference type="Proteomes" id="UP000001010">
    <property type="component" value="Chromosome"/>
</dbReference>
<dbReference type="GO" id="GO:0005737">
    <property type="term" value="C:cytoplasm"/>
    <property type="evidence" value="ECO:0007669"/>
    <property type="project" value="UniProtKB-SubCell"/>
</dbReference>
<dbReference type="GO" id="GO:0016153">
    <property type="term" value="F:urocanate hydratase activity"/>
    <property type="evidence" value="ECO:0000318"/>
    <property type="project" value="GO_Central"/>
</dbReference>
<dbReference type="GO" id="GO:0006548">
    <property type="term" value="P:L-histidine catabolic process"/>
    <property type="evidence" value="ECO:0000318"/>
    <property type="project" value="GO_Central"/>
</dbReference>
<dbReference type="GO" id="GO:0019556">
    <property type="term" value="P:L-histidine catabolic process to glutamate and formamide"/>
    <property type="evidence" value="ECO:0007669"/>
    <property type="project" value="UniProtKB-UniPathway"/>
</dbReference>
<dbReference type="GO" id="GO:0019557">
    <property type="term" value="P:L-histidine catabolic process to glutamate and formate"/>
    <property type="evidence" value="ECO:0007669"/>
    <property type="project" value="UniProtKB-UniPathway"/>
</dbReference>
<dbReference type="FunFam" id="3.40.50.10730:FF:000001">
    <property type="entry name" value="Urocanate hydratase"/>
    <property type="match status" value="1"/>
</dbReference>
<dbReference type="Gene3D" id="3.40.50.10730">
    <property type="entry name" value="Urocanase like domains"/>
    <property type="match status" value="1"/>
</dbReference>
<dbReference type="Gene3D" id="3.40.1770.10">
    <property type="entry name" value="Urocanase superfamily"/>
    <property type="match status" value="1"/>
</dbReference>
<dbReference type="HAMAP" id="MF_00577">
    <property type="entry name" value="HutU"/>
    <property type="match status" value="1"/>
</dbReference>
<dbReference type="InterPro" id="IPR055351">
    <property type="entry name" value="Urocanase"/>
</dbReference>
<dbReference type="InterPro" id="IPR023637">
    <property type="entry name" value="Urocanase-like"/>
</dbReference>
<dbReference type="InterPro" id="IPR035401">
    <property type="entry name" value="Urocanase_C"/>
</dbReference>
<dbReference type="InterPro" id="IPR038364">
    <property type="entry name" value="Urocanase_central_sf"/>
</dbReference>
<dbReference type="InterPro" id="IPR023636">
    <property type="entry name" value="Urocanase_CS"/>
</dbReference>
<dbReference type="InterPro" id="IPR035400">
    <property type="entry name" value="Urocanase_N"/>
</dbReference>
<dbReference type="InterPro" id="IPR035085">
    <property type="entry name" value="Urocanase_Rossmann-like"/>
</dbReference>
<dbReference type="InterPro" id="IPR036190">
    <property type="entry name" value="Urocanase_sf"/>
</dbReference>
<dbReference type="NCBIfam" id="TIGR01228">
    <property type="entry name" value="hutU"/>
    <property type="match status" value="1"/>
</dbReference>
<dbReference type="NCBIfam" id="NF003820">
    <property type="entry name" value="PRK05414.1"/>
    <property type="match status" value="1"/>
</dbReference>
<dbReference type="PANTHER" id="PTHR12216">
    <property type="entry name" value="UROCANATE HYDRATASE"/>
    <property type="match status" value="1"/>
</dbReference>
<dbReference type="PANTHER" id="PTHR12216:SF4">
    <property type="entry name" value="UROCANATE HYDRATASE"/>
    <property type="match status" value="1"/>
</dbReference>
<dbReference type="Pfam" id="PF01175">
    <property type="entry name" value="Urocanase"/>
    <property type="match status" value="1"/>
</dbReference>
<dbReference type="Pfam" id="PF17392">
    <property type="entry name" value="Urocanase_C"/>
    <property type="match status" value="1"/>
</dbReference>
<dbReference type="Pfam" id="PF17391">
    <property type="entry name" value="Urocanase_N"/>
    <property type="match status" value="1"/>
</dbReference>
<dbReference type="PIRSF" id="PIRSF001423">
    <property type="entry name" value="Urocanate_hydrat"/>
    <property type="match status" value="1"/>
</dbReference>
<dbReference type="SUPFAM" id="SSF111326">
    <property type="entry name" value="Urocanase"/>
    <property type="match status" value="1"/>
</dbReference>
<dbReference type="PROSITE" id="PS01233">
    <property type="entry name" value="UROCANASE"/>
    <property type="match status" value="1"/>
</dbReference>